<organism>
    <name type="scientific">Sphingopyxis alaskensis (strain DSM 13593 / LMG 18877 / RB2256)</name>
    <name type="common">Sphingomonas alaskensis</name>
    <dbReference type="NCBI Taxonomy" id="317655"/>
    <lineage>
        <taxon>Bacteria</taxon>
        <taxon>Pseudomonadati</taxon>
        <taxon>Pseudomonadota</taxon>
        <taxon>Alphaproteobacteria</taxon>
        <taxon>Sphingomonadales</taxon>
        <taxon>Sphingomonadaceae</taxon>
        <taxon>Sphingopyxis</taxon>
    </lineage>
</organism>
<comment type="function">
    <text evidence="1">Single strand-specific metallo-endoribonuclease involved in late-stage 70S ribosome quality control and in maturation of the 3' terminus of the 16S rRNA.</text>
</comment>
<comment type="cofactor">
    <cofactor evidence="1">
        <name>Zn(2+)</name>
        <dbReference type="ChEBI" id="CHEBI:29105"/>
    </cofactor>
    <text evidence="1">Binds 1 zinc ion.</text>
</comment>
<comment type="subcellular location">
    <subcellularLocation>
        <location evidence="1">Cytoplasm</location>
    </subcellularLocation>
</comment>
<comment type="similarity">
    <text evidence="1">Belongs to the endoribonuclease YbeY family.</text>
</comment>
<gene>
    <name evidence="1" type="primary">ybeY</name>
    <name type="ordered locus">Sala_2159</name>
</gene>
<feature type="chain" id="PRO_0000284317" description="Endoribonuclease YbeY">
    <location>
        <begin position="1"/>
        <end position="168"/>
    </location>
</feature>
<feature type="binding site" evidence="1">
    <location>
        <position position="128"/>
    </location>
    <ligand>
        <name>Zn(2+)</name>
        <dbReference type="ChEBI" id="CHEBI:29105"/>
        <note>catalytic</note>
    </ligand>
</feature>
<feature type="binding site" evidence="1">
    <location>
        <position position="132"/>
    </location>
    <ligand>
        <name>Zn(2+)</name>
        <dbReference type="ChEBI" id="CHEBI:29105"/>
        <note>catalytic</note>
    </ligand>
</feature>
<feature type="binding site" evidence="1">
    <location>
        <position position="138"/>
    </location>
    <ligand>
        <name>Zn(2+)</name>
        <dbReference type="ChEBI" id="CHEBI:29105"/>
        <note>catalytic</note>
    </ligand>
</feature>
<proteinExistence type="inferred from homology"/>
<sequence>MLSVETHAAAPWPDALDWAARAAEAVAAAFAITPFAALADAAPLVEVAVRLTDDAEVHTLNRDFRGRDKPTNVLSFPQVQNDLLESLANSDDGEILLGDIVLARETCAREADEKGVSLAAHATHLIVHGALHLVGYDHMDDVSAAAMEALEVKALASLGIANPYADQD</sequence>
<name>YBEY_SPHAL</name>
<keyword id="KW-0963">Cytoplasm</keyword>
<keyword id="KW-0255">Endonuclease</keyword>
<keyword id="KW-0378">Hydrolase</keyword>
<keyword id="KW-0479">Metal-binding</keyword>
<keyword id="KW-0540">Nuclease</keyword>
<keyword id="KW-1185">Reference proteome</keyword>
<keyword id="KW-0690">Ribosome biogenesis</keyword>
<keyword id="KW-0698">rRNA processing</keyword>
<keyword id="KW-0862">Zinc</keyword>
<dbReference type="EC" id="3.1.-.-" evidence="1"/>
<dbReference type="EMBL" id="CP000356">
    <property type="protein sequence ID" value="ABF53868.1"/>
    <property type="molecule type" value="Genomic_DNA"/>
</dbReference>
<dbReference type="RefSeq" id="WP_011542444.1">
    <property type="nucleotide sequence ID" value="NC_008048.1"/>
</dbReference>
<dbReference type="SMR" id="Q1GR54"/>
<dbReference type="STRING" id="317655.Sala_2159"/>
<dbReference type="KEGG" id="sal:Sala_2159"/>
<dbReference type="eggNOG" id="COG0319">
    <property type="taxonomic scope" value="Bacteria"/>
</dbReference>
<dbReference type="HOGENOM" id="CLU_106710_0_0_5"/>
<dbReference type="OrthoDB" id="9807740at2"/>
<dbReference type="Proteomes" id="UP000006578">
    <property type="component" value="Chromosome"/>
</dbReference>
<dbReference type="GO" id="GO:0005737">
    <property type="term" value="C:cytoplasm"/>
    <property type="evidence" value="ECO:0007669"/>
    <property type="project" value="UniProtKB-SubCell"/>
</dbReference>
<dbReference type="GO" id="GO:0004222">
    <property type="term" value="F:metalloendopeptidase activity"/>
    <property type="evidence" value="ECO:0007669"/>
    <property type="project" value="InterPro"/>
</dbReference>
<dbReference type="GO" id="GO:0004521">
    <property type="term" value="F:RNA endonuclease activity"/>
    <property type="evidence" value="ECO:0007669"/>
    <property type="project" value="UniProtKB-UniRule"/>
</dbReference>
<dbReference type="GO" id="GO:0008270">
    <property type="term" value="F:zinc ion binding"/>
    <property type="evidence" value="ECO:0007669"/>
    <property type="project" value="UniProtKB-UniRule"/>
</dbReference>
<dbReference type="GO" id="GO:0006364">
    <property type="term" value="P:rRNA processing"/>
    <property type="evidence" value="ECO:0007669"/>
    <property type="project" value="UniProtKB-UniRule"/>
</dbReference>
<dbReference type="Gene3D" id="3.40.390.30">
    <property type="entry name" value="Metalloproteases ('zincins'), catalytic domain"/>
    <property type="match status" value="1"/>
</dbReference>
<dbReference type="HAMAP" id="MF_00009">
    <property type="entry name" value="Endoribonucl_YbeY"/>
    <property type="match status" value="1"/>
</dbReference>
<dbReference type="InterPro" id="IPR023091">
    <property type="entry name" value="MetalPrtase_cat_dom_sf_prd"/>
</dbReference>
<dbReference type="InterPro" id="IPR002036">
    <property type="entry name" value="YbeY"/>
</dbReference>
<dbReference type="InterPro" id="IPR020549">
    <property type="entry name" value="YbeY_CS"/>
</dbReference>
<dbReference type="NCBIfam" id="TIGR00043">
    <property type="entry name" value="rRNA maturation RNase YbeY"/>
    <property type="match status" value="1"/>
</dbReference>
<dbReference type="PANTHER" id="PTHR46986">
    <property type="entry name" value="ENDORIBONUCLEASE YBEY, CHLOROPLASTIC"/>
    <property type="match status" value="1"/>
</dbReference>
<dbReference type="PANTHER" id="PTHR46986:SF1">
    <property type="entry name" value="ENDORIBONUCLEASE YBEY, CHLOROPLASTIC"/>
    <property type="match status" value="1"/>
</dbReference>
<dbReference type="Pfam" id="PF02130">
    <property type="entry name" value="YbeY"/>
    <property type="match status" value="1"/>
</dbReference>
<dbReference type="SUPFAM" id="SSF55486">
    <property type="entry name" value="Metalloproteases ('zincins'), catalytic domain"/>
    <property type="match status" value="1"/>
</dbReference>
<dbReference type="PROSITE" id="PS01306">
    <property type="entry name" value="UPF0054"/>
    <property type="match status" value="1"/>
</dbReference>
<evidence type="ECO:0000255" key="1">
    <source>
        <dbReference type="HAMAP-Rule" id="MF_00009"/>
    </source>
</evidence>
<accession>Q1GR54</accession>
<reference key="1">
    <citation type="journal article" date="2009" name="Proc. Natl. Acad. Sci. U.S.A.">
        <title>The genomic basis of trophic strategy in marine bacteria.</title>
        <authorList>
            <person name="Lauro F.M."/>
            <person name="McDougald D."/>
            <person name="Thomas T."/>
            <person name="Williams T.J."/>
            <person name="Egan S."/>
            <person name="Rice S."/>
            <person name="DeMaere M.Z."/>
            <person name="Ting L."/>
            <person name="Ertan H."/>
            <person name="Johnson J."/>
            <person name="Ferriera S."/>
            <person name="Lapidus A."/>
            <person name="Anderson I."/>
            <person name="Kyrpides N."/>
            <person name="Munk A.C."/>
            <person name="Detter C."/>
            <person name="Han C.S."/>
            <person name="Brown M.V."/>
            <person name="Robb F.T."/>
            <person name="Kjelleberg S."/>
            <person name="Cavicchioli R."/>
        </authorList>
    </citation>
    <scope>NUCLEOTIDE SEQUENCE [LARGE SCALE GENOMIC DNA]</scope>
    <source>
        <strain>DSM 13593 / LMG 18877 / RB2256</strain>
    </source>
</reference>
<protein>
    <recommendedName>
        <fullName evidence="1">Endoribonuclease YbeY</fullName>
        <ecNumber evidence="1">3.1.-.-</ecNumber>
    </recommendedName>
</protein>